<name>WIZ_HUMAN</name>
<reference key="1">
    <citation type="journal article" date="2004" name="Nat. Genet.">
        <title>Complete sequencing and characterization of 21,243 full-length human cDNAs.</title>
        <authorList>
            <person name="Ota T."/>
            <person name="Suzuki Y."/>
            <person name="Nishikawa T."/>
            <person name="Otsuki T."/>
            <person name="Sugiyama T."/>
            <person name="Irie R."/>
            <person name="Wakamatsu A."/>
            <person name="Hayashi K."/>
            <person name="Sato H."/>
            <person name="Nagai K."/>
            <person name="Kimura K."/>
            <person name="Makita H."/>
            <person name="Sekine M."/>
            <person name="Obayashi M."/>
            <person name="Nishi T."/>
            <person name="Shibahara T."/>
            <person name="Tanaka T."/>
            <person name="Ishii S."/>
            <person name="Yamamoto J."/>
            <person name="Saito K."/>
            <person name="Kawai Y."/>
            <person name="Isono Y."/>
            <person name="Nakamura Y."/>
            <person name="Nagahari K."/>
            <person name="Murakami K."/>
            <person name="Yasuda T."/>
            <person name="Iwayanagi T."/>
            <person name="Wagatsuma M."/>
            <person name="Shiratori A."/>
            <person name="Sudo H."/>
            <person name="Hosoiri T."/>
            <person name="Kaku Y."/>
            <person name="Kodaira H."/>
            <person name="Kondo H."/>
            <person name="Sugawara M."/>
            <person name="Takahashi M."/>
            <person name="Kanda K."/>
            <person name="Yokoi T."/>
            <person name="Furuya T."/>
            <person name="Kikkawa E."/>
            <person name="Omura Y."/>
            <person name="Abe K."/>
            <person name="Kamihara K."/>
            <person name="Katsuta N."/>
            <person name="Sato K."/>
            <person name="Tanikawa M."/>
            <person name="Yamazaki M."/>
            <person name="Ninomiya K."/>
            <person name="Ishibashi T."/>
            <person name="Yamashita H."/>
            <person name="Murakawa K."/>
            <person name="Fujimori K."/>
            <person name="Tanai H."/>
            <person name="Kimata M."/>
            <person name="Watanabe M."/>
            <person name="Hiraoka S."/>
            <person name="Chiba Y."/>
            <person name="Ishida S."/>
            <person name="Ono Y."/>
            <person name="Takiguchi S."/>
            <person name="Watanabe S."/>
            <person name="Yosida M."/>
            <person name="Hotuta T."/>
            <person name="Kusano J."/>
            <person name="Kanehori K."/>
            <person name="Takahashi-Fujii A."/>
            <person name="Hara H."/>
            <person name="Tanase T.-O."/>
            <person name="Nomura Y."/>
            <person name="Togiya S."/>
            <person name="Komai F."/>
            <person name="Hara R."/>
            <person name="Takeuchi K."/>
            <person name="Arita M."/>
            <person name="Imose N."/>
            <person name="Musashino K."/>
            <person name="Yuuki H."/>
            <person name="Oshima A."/>
            <person name="Sasaki N."/>
            <person name="Aotsuka S."/>
            <person name="Yoshikawa Y."/>
            <person name="Matsunawa H."/>
            <person name="Ichihara T."/>
            <person name="Shiohata N."/>
            <person name="Sano S."/>
            <person name="Moriya S."/>
            <person name="Momiyama H."/>
            <person name="Satoh N."/>
            <person name="Takami S."/>
            <person name="Terashima Y."/>
            <person name="Suzuki O."/>
            <person name="Nakagawa S."/>
            <person name="Senoh A."/>
            <person name="Mizoguchi H."/>
            <person name="Goto Y."/>
            <person name="Shimizu F."/>
            <person name="Wakebe H."/>
            <person name="Hishigaki H."/>
            <person name="Watanabe T."/>
            <person name="Sugiyama A."/>
            <person name="Takemoto M."/>
            <person name="Kawakami B."/>
            <person name="Yamazaki M."/>
            <person name="Watanabe K."/>
            <person name="Kumagai A."/>
            <person name="Itakura S."/>
            <person name="Fukuzumi Y."/>
            <person name="Fujimori Y."/>
            <person name="Komiyama M."/>
            <person name="Tashiro H."/>
            <person name="Tanigami A."/>
            <person name="Fujiwara T."/>
            <person name="Ono T."/>
            <person name="Yamada K."/>
            <person name="Fujii Y."/>
            <person name="Ozaki K."/>
            <person name="Hirao M."/>
            <person name="Ohmori Y."/>
            <person name="Kawabata A."/>
            <person name="Hikiji T."/>
            <person name="Kobatake N."/>
            <person name="Inagaki H."/>
            <person name="Ikema Y."/>
            <person name="Okamoto S."/>
            <person name="Okitani R."/>
            <person name="Kawakami T."/>
            <person name="Noguchi S."/>
            <person name="Itoh T."/>
            <person name="Shigeta K."/>
            <person name="Senba T."/>
            <person name="Matsumura K."/>
            <person name="Nakajima Y."/>
            <person name="Mizuno T."/>
            <person name="Morinaga M."/>
            <person name="Sasaki M."/>
            <person name="Togashi T."/>
            <person name="Oyama M."/>
            <person name="Hata H."/>
            <person name="Watanabe M."/>
            <person name="Komatsu T."/>
            <person name="Mizushima-Sugano J."/>
            <person name="Satoh T."/>
            <person name="Shirai Y."/>
            <person name="Takahashi Y."/>
            <person name="Nakagawa K."/>
            <person name="Okumura K."/>
            <person name="Nagase T."/>
            <person name="Nomura N."/>
            <person name="Kikuchi H."/>
            <person name="Masuho Y."/>
            <person name="Yamashita R."/>
            <person name="Nakai K."/>
            <person name="Yada T."/>
            <person name="Nakamura Y."/>
            <person name="Ohara O."/>
            <person name="Isogai T."/>
            <person name="Sugano S."/>
        </authorList>
    </citation>
    <scope>NUCLEOTIDE SEQUENCE [LARGE SCALE MRNA] (ISOFORMS 2 AND 4)</scope>
    <scope>NUCLEOTIDE SEQUENCE [LARGE SCALE MRNA] OF 1136-1651 (ISOFORM 1)</scope>
    <source>
        <tissue>Brain</tissue>
    </source>
</reference>
<reference key="2">
    <citation type="journal article" date="2004" name="Nature">
        <title>The DNA sequence and biology of human chromosome 19.</title>
        <authorList>
            <person name="Grimwood J."/>
            <person name="Gordon L.A."/>
            <person name="Olsen A.S."/>
            <person name="Terry A."/>
            <person name="Schmutz J."/>
            <person name="Lamerdin J.E."/>
            <person name="Hellsten U."/>
            <person name="Goodstein D."/>
            <person name="Couronne O."/>
            <person name="Tran-Gyamfi M."/>
            <person name="Aerts A."/>
            <person name="Altherr M."/>
            <person name="Ashworth L."/>
            <person name="Bajorek E."/>
            <person name="Black S."/>
            <person name="Branscomb E."/>
            <person name="Caenepeel S."/>
            <person name="Carrano A.V."/>
            <person name="Caoile C."/>
            <person name="Chan Y.M."/>
            <person name="Christensen M."/>
            <person name="Cleland C.A."/>
            <person name="Copeland A."/>
            <person name="Dalin E."/>
            <person name="Dehal P."/>
            <person name="Denys M."/>
            <person name="Detter J.C."/>
            <person name="Escobar J."/>
            <person name="Flowers D."/>
            <person name="Fotopulos D."/>
            <person name="Garcia C."/>
            <person name="Georgescu A.M."/>
            <person name="Glavina T."/>
            <person name="Gomez M."/>
            <person name="Gonzales E."/>
            <person name="Groza M."/>
            <person name="Hammon N."/>
            <person name="Hawkins T."/>
            <person name="Haydu L."/>
            <person name="Ho I."/>
            <person name="Huang W."/>
            <person name="Israni S."/>
            <person name="Jett J."/>
            <person name="Kadner K."/>
            <person name="Kimball H."/>
            <person name="Kobayashi A."/>
            <person name="Larionov V."/>
            <person name="Leem S.-H."/>
            <person name="Lopez F."/>
            <person name="Lou Y."/>
            <person name="Lowry S."/>
            <person name="Malfatti S."/>
            <person name="Martinez D."/>
            <person name="McCready P.M."/>
            <person name="Medina C."/>
            <person name="Morgan J."/>
            <person name="Nelson K."/>
            <person name="Nolan M."/>
            <person name="Ovcharenko I."/>
            <person name="Pitluck S."/>
            <person name="Pollard M."/>
            <person name="Popkie A.P."/>
            <person name="Predki P."/>
            <person name="Quan G."/>
            <person name="Ramirez L."/>
            <person name="Rash S."/>
            <person name="Retterer J."/>
            <person name="Rodriguez A."/>
            <person name="Rogers S."/>
            <person name="Salamov A."/>
            <person name="Salazar A."/>
            <person name="She X."/>
            <person name="Smith D."/>
            <person name="Slezak T."/>
            <person name="Solovyev V."/>
            <person name="Thayer N."/>
            <person name="Tice H."/>
            <person name="Tsai M."/>
            <person name="Ustaszewska A."/>
            <person name="Vo N."/>
            <person name="Wagner M."/>
            <person name="Wheeler J."/>
            <person name="Wu K."/>
            <person name="Xie G."/>
            <person name="Yang J."/>
            <person name="Dubchak I."/>
            <person name="Furey T.S."/>
            <person name="DeJong P."/>
            <person name="Dickson M."/>
            <person name="Gordon D."/>
            <person name="Eichler E.E."/>
            <person name="Pennacchio L.A."/>
            <person name="Richardson P."/>
            <person name="Stubbs L."/>
            <person name="Rokhsar D.S."/>
            <person name="Myers R.M."/>
            <person name="Rubin E.M."/>
            <person name="Lucas S.M."/>
        </authorList>
    </citation>
    <scope>NUCLEOTIDE SEQUENCE [LARGE SCALE GENOMIC DNA]</scope>
</reference>
<reference key="3">
    <citation type="journal article" date="2004" name="Genome Res.">
        <title>The status, quality, and expansion of the NIH full-length cDNA project: the Mammalian Gene Collection (MGC).</title>
        <authorList>
            <consortium name="The MGC Project Team"/>
        </authorList>
    </citation>
    <scope>NUCLEOTIDE SEQUENCE [LARGE SCALE MRNA] (ISOFORM 3)</scope>
    <scope>NUCLEOTIDE SEQUENCE [LARGE SCALE MRNA] OF 1042-1651 (ISOFORM 1)</scope>
    <source>
        <tissue>B-cell</tissue>
        <tissue>Brain</tissue>
        <tissue>Muscle</tissue>
        <tissue>Skin</tissue>
    </source>
</reference>
<reference key="4">
    <citation type="journal article" date="2007" name="BMC Genomics">
        <title>The full-ORF clone resource of the German cDNA consortium.</title>
        <authorList>
            <person name="Bechtel S."/>
            <person name="Rosenfelder H."/>
            <person name="Duda A."/>
            <person name="Schmidt C.P."/>
            <person name="Ernst U."/>
            <person name="Wellenreuther R."/>
            <person name="Mehrle A."/>
            <person name="Schuster C."/>
            <person name="Bahr A."/>
            <person name="Bloecker H."/>
            <person name="Heubner D."/>
            <person name="Hoerlein A."/>
            <person name="Michel G."/>
            <person name="Wedler H."/>
            <person name="Koehrer K."/>
            <person name="Ottenwaelder B."/>
            <person name="Poustka A."/>
            <person name="Wiemann S."/>
            <person name="Schupp I."/>
        </authorList>
    </citation>
    <scope>NUCLEOTIDE SEQUENCE [LARGE SCALE MRNA] OF 1496-1651 (ISOFORM 1)</scope>
    <source>
        <tissue>Brain</tissue>
    </source>
</reference>
<reference key="5">
    <citation type="journal article" date="2006" name="Cell">
        <title>Global, in vivo, and site-specific phosphorylation dynamics in signaling networks.</title>
        <authorList>
            <person name="Olsen J.V."/>
            <person name="Blagoev B."/>
            <person name="Gnad F."/>
            <person name="Macek B."/>
            <person name="Kumar C."/>
            <person name="Mortensen P."/>
            <person name="Mann M."/>
        </authorList>
    </citation>
    <scope>IDENTIFICATION BY MASS SPECTROMETRY [LARGE SCALE ANALYSIS]</scope>
    <source>
        <tissue>Cervix carcinoma</tissue>
    </source>
</reference>
<reference key="6">
    <citation type="journal article" date="2006" name="Nat. Biotechnol.">
        <title>A probability-based approach for high-throughput protein phosphorylation analysis and site localization.</title>
        <authorList>
            <person name="Beausoleil S.A."/>
            <person name="Villen J."/>
            <person name="Gerber S.A."/>
            <person name="Rush J."/>
            <person name="Gygi S.P."/>
        </authorList>
    </citation>
    <scope>IDENTIFICATION BY MASS SPECTROMETRY [LARGE SCALE ANALYSIS]</scope>
    <source>
        <tissue>Cervix carcinoma</tissue>
    </source>
</reference>
<reference key="7">
    <citation type="journal article" date="2008" name="Mol. Cell">
        <title>Kinase-selective enrichment enables quantitative phosphoproteomics of the kinome across the cell cycle.</title>
        <authorList>
            <person name="Daub H."/>
            <person name="Olsen J.V."/>
            <person name="Bairlein M."/>
            <person name="Gnad F."/>
            <person name="Oppermann F.S."/>
            <person name="Korner R."/>
            <person name="Greff Z."/>
            <person name="Keri G."/>
            <person name="Stemmann O."/>
            <person name="Mann M."/>
        </authorList>
    </citation>
    <scope>PHOSPHORYLATION [LARGE SCALE ANALYSIS] AT SER-1134</scope>
    <scope>IDENTIFICATION BY MASS SPECTROMETRY [LARGE SCALE ANALYSIS]</scope>
    <source>
        <tissue>Cervix carcinoma</tissue>
    </source>
</reference>
<reference key="8">
    <citation type="journal article" date="2008" name="Mol. Cell">
        <title>CDYL bridges REST and histone methyltransferases for gene repression and suppression of cellular transformation.</title>
        <authorList>
            <person name="Mulligan P."/>
            <person name="Westbrook T.F."/>
            <person name="Ottinger M."/>
            <person name="Pavlova N."/>
            <person name="Chang B."/>
            <person name="Macia E."/>
            <person name="Shi Y.J."/>
            <person name="Barretina J."/>
            <person name="Liu J."/>
            <person name="Howley P.M."/>
            <person name="Elledge S.J."/>
            <person name="Shi Y."/>
        </authorList>
    </citation>
    <scope>IDENTIFICATION IN A COMPLEX WITH REST; CDYL; SETB1; EHMT1 AND EHMT2</scope>
</reference>
<reference key="9">
    <citation type="journal article" date="2008" name="Nat. Chem. Biol.">
        <title>Protein lysine methyltransferase G9a acts on non-histone targets.</title>
        <authorList>
            <person name="Rathert P."/>
            <person name="Dhayalan A."/>
            <person name="Murakami M."/>
            <person name="Zhang X."/>
            <person name="Tamas R."/>
            <person name="Jurkowska R."/>
            <person name="Komatsu Y."/>
            <person name="Shinkai Y."/>
            <person name="Cheng X."/>
            <person name="Jeltsch A."/>
        </authorList>
    </citation>
    <scope>METHYLATION AT LYS-1162</scope>
    <scope>IDENTIFICATION BY MASS SPECTROMETRY</scope>
</reference>
<reference key="10">
    <citation type="journal article" date="2008" name="Proc. Natl. Acad. Sci. U.S.A.">
        <title>A quantitative atlas of mitotic phosphorylation.</title>
        <authorList>
            <person name="Dephoure N."/>
            <person name="Zhou C."/>
            <person name="Villen J."/>
            <person name="Beausoleil S.A."/>
            <person name="Bakalarski C.E."/>
            <person name="Elledge S.J."/>
            <person name="Gygi S.P."/>
        </authorList>
    </citation>
    <scope>PHOSPHORYLATION [LARGE SCALE ANALYSIS] AT SER-1006; SER-1012; SER-1017; SER-1127; SER-1134; SER-1146 AND SER-1151</scope>
    <scope>IDENTIFICATION BY MASS SPECTROMETRY [LARGE SCALE ANALYSIS]</scope>
    <source>
        <tissue>Cervix carcinoma</tissue>
    </source>
</reference>
<reference key="11">
    <citation type="journal article" date="2009" name="Anal. Chem.">
        <title>Lys-N and trypsin cover complementary parts of the phosphoproteome in a refined SCX-based approach.</title>
        <authorList>
            <person name="Gauci S."/>
            <person name="Helbig A.O."/>
            <person name="Slijper M."/>
            <person name="Krijgsveld J."/>
            <person name="Heck A.J."/>
            <person name="Mohammed S."/>
        </authorList>
    </citation>
    <scope>IDENTIFICATION BY MASS SPECTROMETRY [LARGE SCALE ANALYSIS]</scope>
</reference>
<reference key="12">
    <citation type="journal article" date="2009" name="Sci. Signal.">
        <title>Quantitative phosphoproteomic analysis of T cell receptor signaling reveals system-wide modulation of protein-protein interactions.</title>
        <authorList>
            <person name="Mayya V."/>
            <person name="Lundgren D.H."/>
            <person name="Hwang S.-I."/>
            <person name="Rezaul K."/>
            <person name="Wu L."/>
            <person name="Eng J.K."/>
            <person name="Rodionov V."/>
            <person name="Han D.K."/>
        </authorList>
    </citation>
    <scope>PHOSPHORYLATION [LARGE SCALE ANALYSIS] AT SER-996; SER-1006; SER-1012 AND SER-1017</scope>
    <scope>IDENTIFICATION BY MASS SPECTROMETRY [LARGE SCALE ANALYSIS]</scope>
    <source>
        <tissue>Leukemic T-cell</tissue>
    </source>
</reference>
<reference key="13">
    <citation type="journal article" date="2010" name="Sci. Signal.">
        <title>Quantitative phosphoproteomics reveals widespread full phosphorylation site occupancy during mitosis.</title>
        <authorList>
            <person name="Olsen J.V."/>
            <person name="Vermeulen M."/>
            <person name="Santamaria A."/>
            <person name="Kumar C."/>
            <person name="Miller M.L."/>
            <person name="Jensen L.J."/>
            <person name="Gnad F."/>
            <person name="Cox J."/>
            <person name="Jensen T.S."/>
            <person name="Nigg E.A."/>
            <person name="Brunak S."/>
            <person name="Mann M."/>
        </authorList>
    </citation>
    <scope>PHOSPHORYLATION [LARGE SCALE ANALYSIS] AT SER-996; THR-998; SER-1006; SER-1012; SER-1017; SER-1079; SER-1134; SER-1263; SER-1309; SER-1314 AND SER-1517</scope>
    <scope>IDENTIFICATION BY MASS SPECTROMETRY [LARGE SCALE ANALYSIS]</scope>
    <source>
        <tissue>Cervix carcinoma</tissue>
    </source>
</reference>
<reference key="14">
    <citation type="journal article" date="2011" name="Sci. Signal.">
        <title>System-wide temporal characterization of the proteome and phosphoproteome of human embryonic stem cell differentiation.</title>
        <authorList>
            <person name="Rigbolt K.T."/>
            <person name="Prokhorova T.A."/>
            <person name="Akimov V."/>
            <person name="Henningsen J."/>
            <person name="Johansen P.T."/>
            <person name="Kratchmarova I."/>
            <person name="Kassem M."/>
            <person name="Mann M."/>
            <person name="Olsen J.V."/>
            <person name="Blagoev B."/>
        </authorList>
    </citation>
    <scope>PHOSPHORYLATION [LARGE SCALE ANALYSIS] AT SER-996; THR-998; SER-1006; SER-1012 AND SER-1017</scope>
    <scope>IDENTIFICATION BY MASS SPECTROMETRY [LARGE SCALE ANALYSIS]</scope>
</reference>
<reference key="15">
    <citation type="journal article" date="2013" name="J. Proteome Res.">
        <title>Toward a comprehensive characterization of a human cancer cell phosphoproteome.</title>
        <authorList>
            <person name="Zhou H."/>
            <person name="Di Palma S."/>
            <person name="Preisinger C."/>
            <person name="Peng M."/>
            <person name="Polat A.N."/>
            <person name="Heck A.J."/>
            <person name="Mohammed S."/>
        </authorList>
    </citation>
    <scope>PHOSPHORYLATION [LARGE SCALE ANALYSIS] AT SER-996; THR-998; SER-1006; SER-1012; SER-1017; SER-1025; SER-1106; SER-1122; SER-1127; SER-1134; SER-1146; SER-1480 AND SER-1517</scope>
    <scope>IDENTIFICATION BY MASS SPECTROMETRY [LARGE SCALE ANALYSIS]</scope>
    <source>
        <tissue>Cervix carcinoma</tissue>
        <tissue>Erythroleukemia</tissue>
    </source>
</reference>
<reference key="16">
    <citation type="journal article" date="2014" name="Nat. Struct. Mol. Biol.">
        <title>Uncovering global SUMOylation signaling networks in a site-specific manner.</title>
        <authorList>
            <person name="Hendriks I.A."/>
            <person name="D'Souza R.C."/>
            <person name="Yang B."/>
            <person name="Verlaan-de Vries M."/>
            <person name="Mann M."/>
            <person name="Vertegaal A.C."/>
        </authorList>
    </citation>
    <scope>SUMOYLATION [LARGE SCALE ANALYSIS] AT LYS-988; LYS-1108; LYS-1112; LYS-1177; LYS-1356; LYS-1370; LYS-1372; LYS-1382 AND LYS-1523</scope>
    <scope>SUMOYLATION [LARGE SCALE ANALYSIS] AT LYS-39 (ISOFORM 3)</scope>
    <scope>SUMOYLATION [LARGE SCALE ANALYSIS] AT LYS-42 (ISOFORM 4)</scope>
    <scope>IDENTIFICATION BY MASS SPECTROMETRY [LARGE SCALE ANALYSIS]</scope>
</reference>
<reference key="17">
    <citation type="journal article" date="2014" name="Proc. Natl. Acad. Sci. U.S.A.">
        <title>Mapping of SUMO sites and analysis of SUMOylation changes induced by external stimuli.</title>
        <authorList>
            <person name="Impens F."/>
            <person name="Radoshevich L."/>
            <person name="Cossart P."/>
            <person name="Ribet D."/>
        </authorList>
    </citation>
    <scope>SUMOYLATION [LARGE SCALE ANALYSIS] AT LYS-1523</scope>
    <scope>IDENTIFICATION BY MASS SPECTROMETRY [LARGE SCALE ANALYSIS]</scope>
</reference>
<reference key="18">
    <citation type="journal article" date="2015" name="Cell Rep.">
        <title>SUMO-2 orchestrates chromatin modifiers in response to DNA damage.</title>
        <authorList>
            <person name="Hendriks I.A."/>
            <person name="Treffers L.W."/>
            <person name="Verlaan-de Vries M."/>
            <person name="Olsen J.V."/>
            <person name="Vertegaal A.C."/>
        </authorList>
    </citation>
    <scope>SUMOYLATION [LARGE SCALE ANALYSIS] AT LYS-939; LYS-988; LYS-1112; LYS-1282; LYS-1343; LYS-1356; LYS-1372; LYS-1477 AND LYS-1523</scope>
    <scope>SUMOYLATION [LARGE SCALE ANALYSIS] AT LYS-11 AND LYS-258 (ISOFORM 3)</scope>
    <scope>SUMOYLATION [LARGE SCALE ANALYSIS] AT LYS-14 (ISOFORM 4)</scope>
    <scope>IDENTIFICATION BY MASS SPECTROMETRY [LARGE SCALE ANALYSIS]</scope>
</reference>
<reference key="19">
    <citation type="journal article" date="2015" name="Mol. Cell. Proteomics">
        <title>System-wide analysis of SUMOylation dynamics in response to replication stress reveals novel small ubiquitin-like modified target proteins and acceptor lysines relevant for genome stability.</title>
        <authorList>
            <person name="Xiao Z."/>
            <person name="Chang J.G."/>
            <person name="Hendriks I.A."/>
            <person name="Sigurdsson J.O."/>
            <person name="Olsen J.V."/>
            <person name="Vertegaal A.C."/>
        </authorList>
    </citation>
    <scope>SUMOYLATION [LARGE SCALE ANALYSIS] AT LYS-1282; LYS-1370; LYS-1372; LYS-1382; LYS-1448 AND LYS-1523</scope>
    <scope>IDENTIFICATION BY MASS SPECTROMETRY [LARGE SCALE ANALYSIS]</scope>
</reference>
<reference key="20">
    <citation type="journal article" date="2017" name="Nat. Struct. Mol. Biol.">
        <title>Site-specific mapping of the human SUMO proteome reveals co-modification with phosphorylation.</title>
        <authorList>
            <person name="Hendriks I.A."/>
            <person name="Lyon D."/>
            <person name="Young C."/>
            <person name="Jensen L.J."/>
            <person name="Vertegaal A.C."/>
            <person name="Nielsen M.L."/>
        </authorList>
    </citation>
    <scope>SUMOYLATION [LARGE SCALE ANALYSIS] AT LYS-883; LYS-939; LYS-955; LYS-967; LYS-988; LYS-1000; LYS-1005; LYS-1056; LYS-1108; LYS-1112; LYS-1138; LYS-1139; LYS-1177; LYS-1240; LYS-1343; LYS-1356; LYS-1370; LYS-1372; LYS-1382; LYS-1448; LYS-1464; LYS-1477; LYS-1523; LYS-1534; LYS-1560 AND LYS-1630</scope>
    <scope>SUMOYLATION [LARGE SCALE ANALYSIS] AT LYS-11; LYS-29; LYS-39; LYS-258 AND LYS-313 (ISOFORM 3)</scope>
    <scope>SUMOYLATION [LARGE SCALE ANALYSIS] AT LYS-14; LYS-32 AND LYS-42 (ISOFORM 4)</scope>
    <scope>IDENTIFICATION BY MASS SPECTROMETRY [LARGE SCALE ANALYSIS]</scope>
</reference>
<proteinExistence type="evidence at protein level"/>
<gene>
    <name type="primary">WIZ</name>
    <name type="synonym">ZNF803</name>
</gene>
<dbReference type="EMBL" id="AK027615">
    <property type="protein sequence ID" value="BAB55234.1"/>
    <property type="status" value="ALT_INIT"/>
    <property type="molecule type" value="mRNA"/>
</dbReference>
<dbReference type="EMBL" id="AK122890">
    <property type="protein sequence ID" value="BAG53783.1"/>
    <property type="molecule type" value="mRNA"/>
</dbReference>
<dbReference type="EMBL" id="AK131404">
    <property type="protein sequence ID" value="BAD18551.1"/>
    <property type="molecule type" value="mRNA"/>
</dbReference>
<dbReference type="EMBL" id="AC006128">
    <property type="protein sequence ID" value="AAC97985.1"/>
    <property type="molecule type" value="Genomic_DNA"/>
</dbReference>
<dbReference type="EMBL" id="AC007059">
    <property type="protein sequence ID" value="AAD19817.1"/>
    <property type="molecule type" value="Genomic_DNA"/>
</dbReference>
<dbReference type="EMBL" id="AC007059">
    <property type="protein sequence ID" value="AAD19818.1"/>
    <property type="molecule type" value="Genomic_DNA"/>
</dbReference>
<dbReference type="EMBL" id="AC011492">
    <property type="status" value="NOT_ANNOTATED_CDS"/>
    <property type="molecule type" value="Genomic_DNA"/>
</dbReference>
<dbReference type="EMBL" id="BC002329">
    <property type="protein sequence ID" value="AAH02329.2"/>
    <property type="molecule type" value="mRNA"/>
</dbReference>
<dbReference type="EMBL" id="BC007551">
    <property type="protein sequence ID" value="AAH07551.1"/>
    <property type="molecule type" value="mRNA"/>
</dbReference>
<dbReference type="EMBL" id="BC062360">
    <property type="protein sequence ID" value="AAH62360.1"/>
    <property type="molecule type" value="mRNA"/>
</dbReference>
<dbReference type="EMBL" id="BC098445">
    <property type="protein sequence ID" value="AAH98445.1"/>
    <property type="molecule type" value="mRNA"/>
</dbReference>
<dbReference type="EMBL" id="BC144332">
    <property type="protein sequence ID" value="AAI44333.1"/>
    <property type="molecule type" value="mRNA"/>
</dbReference>
<dbReference type="EMBL" id="AL390184">
    <property type="protein sequence ID" value="CAB99102.1"/>
    <property type="molecule type" value="mRNA"/>
</dbReference>
<dbReference type="CCDS" id="CCDS42516.1">
    <molecule id="O95785-2"/>
</dbReference>
<dbReference type="PIR" id="T51885">
    <property type="entry name" value="T51885"/>
</dbReference>
<dbReference type="RefSeq" id="NP_001317324.1">
    <property type="nucleotide sequence ID" value="NM_001330395.1"/>
</dbReference>
<dbReference type="RefSeq" id="NP_067064.2">
    <molecule id="O95785-2"/>
    <property type="nucleotide sequence ID" value="NM_021241.2"/>
</dbReference>
<dbReference type="PDB" id="8TZX">
    <property type="method" value="X-ray"/>
    <property type="resolution" value="3.15 A"/>
    <property type="chains" value="C/F=867-895"/>
</dbReference>
<dbReference type="PDB" id="9DJT">
    <property type="method" value="X-ray"/>
    <property type="resolution" value="2.95 A"/>
    <property type="chains" value="C/F=867-895"/>
</dbReference>
<dbReference type="PDB" id="9DJX">
    <property type="method" value="X-ray"/>
    <property type="resolution" value="3.35 A"/>
    <property type="chains" value="C/F=867-895"/>
</dbReference>
<dbReference type="PDBsum" id="8TZX"/>
<dbReference type="PDBsum" id="9DJT"/>
<dbReference type="PDBsum" id="9DJX"/>
<dbReference type="SMR" id="O95785"/>
<dbReference type="BioGRID" id="121845">
    <property type="interactions" value="217"/>
</dbReference>
<dbReference type="CORUM" id="O95785"/>
<dbReference type="FunCoup" id="O95785">
    <property type="interactions" value="2292"/>
</dbReference>
<dbReference type="IntAct" id="O95785">
    <property type="interactions" value="136"/>
</dbReference>
<dbReference type="MINT" id="O95785"/>
<dbReference type="STRING" id="9606.ENSP00000469534"/>
<dbReference type="ChEMBL" id="CHEMBL4879424"/>
<dbReference type="GlyGen" id="O95785">
    <property type="glycosylation" value="2 sites, 1 O-linked glycan (1 site)"/>
</dbReference>
<dbReference type="iPTMnet" id="O95785"/>
<dbReference type="PhosphoSitePlus" id="O95785"/>
<dbReference type="SwissPalm" id="O95785"/>
<dbReference type="BioMuta" id="WIZ"/>
<dbReference type="jPOST" id="O95785"/>
<dbReference type="MassIVE" id="O95785"/>
<dbReference type="PaxDb" id="9606-ENSP00000263381"/>
<dbReference type="PeptideAtlas" id="O95785"/>
<dbReference type="ProteomicsDB" id="3756"/>
<dbReference type="ProteomicsDB" id="51045">
    <molecule id="O95785-1"/>
</dbReference>
<dbReference type="ProteomicsDB" id="51046">
    <molecule id="O95785-2"/>
</dbReference>
<dbReference type="ProteomicsDB" id="7249"/>
<dbReference type="Pumba" id="O95785"/>
<dbReference type="Antibodypedia" id="7541">
    <property type="antibodies" value="94 antibodies from 25 providers"/>
</dbReference>
<dbReference type="DNASU" id="58525"/>
<dbReference type="Ensembl" id="ENST00000263381.12">
    <molecule id="O95785-2"/>
    <property type="protein sequence ID" value="ENSP00000263381.5"/>
    <property type="gene ID" value="ENSG00000011451.21"/>
</dbReference>
<dbReference type="Ensembl" id="ENST00000545156.5">
    <molecule id="O95785-3"/>
    <property type="protein sequence ID" value="ENSP00000445824.1"/>
    <property type="gene ID" value="ENSG00000011451.21"/>
</dbReference>
<dbReference type="GeneID" id="58525"/>
<dbReference type="KEGG" id="hsa:58525"/>
<dbReference type="UCSC" id="uc002nba.5">
    <molecule id="O95785-1"/>
    <property type="organism name" value="human"/>
</dbReference>
<dbReference type="AGR" id="HGNC:30917"/>
<dbReference type="CTD" id="58525"/>
<dbReference type="GeneCards" id="WIZ"/>
<dbReference type="HGNC" id="HGNC:30917">
    <property type="gene designation" value="WIZ"/>
</dbReference>
<dbReference type="HPA" id="ENSG00000011451">
    <property type="expression patterns" value="Low tissue specificity"/>
</dbReference>
<dbReference type="MIM" id="619715">
    <property type="type" value="gene"/>
</dbReference>
<dbReference type="neXtProt" id="NX_O95785"/>
<dbReference type="OpenTargets" id="ENSG00000011451"/>
<dbReference type="PharmGKB" id="PA162409232"/>
<dbReference type="VEuPathDB" id="HostDB:ENSG00000011451"/>
<dbReference type="eggNOG" id="KOG1721">
    <property type="taxonomic scope" value="Eukaryota"/>
</dbReference>
<dbReference type="GeneTree" id="ENSGT00940000159979"/>
<dbReference type="InParanoid" id="O95785"/>
<dbReference type="OrthoDB" id="8963894at2759"/>
<dbReference type="PAN-GO" id="O95785">
    <property type="GO annotations" value="4 GO annotations based on evolutionary models"/>
</dbReference>
<dbReference type="PhylomeDB" id="O95785"/>
<dbReference type="TreeFam" id="TF333705"/>
<dbReference type="PathwayCommons" id="O95785"/>
<dbReference type="SignaLink" id="O95785"/>
<dbReference type="BioGRID-ORCS" id="58525">
    <property type="hits" value="27 hits in 1166 CRISPR screens"/>
</dbReference>
<dbReference type="ChiTaRS" id="WIZ">
    <property type="organism name" value="human"/>
</dbReference>
<dbReference type="GenomeRNAi" id="58525"/>
<dbReference type="Pharos" id="O95785">
    <property type="development level" value="Tchem"/>
</dbReference>
<dbReference type="PRO" id="PR:O95785"/>
<dbReference type="Proteomes" id="UP000005640">
    <property type="component" value="Chromosome 19"/>
</dbReference>
<dbReference type="RNAct" id="O95785">
    <property type="molecule type" value="protein"/>
</dbReference>
<dbReference type="Bgee" id="ENSG00000011451">
    <property type="expression patterns" value="Expressed in cortical plate and 182 other cell types or tissues"/>
</dbReference>
<dbReference type="ExpressionAtlas" id="O95785">
    <property type="expression patterns" value="baseline and differential"/>
</dbReference>
<dbReference type="GO" id="GO:0070062">
    <property type="term" value="C:extracellular exosome"/>
    <property type="evidence" value="ECO:0007005"/>
    <property type="project" value="UniProtKB"/>
</dbReference>
<dbReference type="GO" id="GO:0030496">
    <property type="term" value="C:midbody"/>
    <property type="evidence" value="ECO:0000314"/>
    <property type="project" value="HPA"/>
</dbReference>
<dbReference type="GO" id="GO:0005654">
    <property type="term" value="C:nucleoplasm"/>
    <property type="evidence" value="ECO:0000314"/>
    <property type="project" value="HPA"/>
</dbReference>
<dbReference type="GO" id="GO:0005634">
    <property type="term" value="C:nucleus"/>
    <property type="evidence" value="ECO:0000314"/>
    <property type="project" value="UniProtKB"/>
</dbReference>
<dbReference type="GO" id="GO:0000981">
    <property type="term" value="F:DNA-binding transcription factor activity, RNA polymerase II-specific"/>
    <property type="evidence" value="ECO:0000314"/>
    <property type="project" value="GO_Central"/>
</dbReference>
<dbReference type="GO" id="GO:1990226">
    <property type="term" value="F:histone methyltransferase binding"/>
    <property type="evidence" value="ECO:0000353"/>
    <property type="project" value="UniProtKB"/>
</dbReference>
<dbReference type="GO" id="GO:0044877">
    <property type="term" value="F:protein-containing complex binding"/>
    <property type="evidence" value="ECO:0000314"/>
    <property type="project" value="UniProtKB"/>
</dbReference>
<dbReference type="GO" id="GO:0000978">
    <property type="term" value="F:RNA polymerase II cis-regulatory region sequence-specific DNA binding"/>
    <property type="evidence" value="ECO:0000314"/>
    <property type="project" value="GO_Central"/>
</dbReference>
<dbReference type="GO" id="GO:0001222">
    <property type="term" value="F:transcription corepressor binding"/>
    <property type="evidence" value="ECO:0000353"/>
    <property type="project" value="ARUK-UCL"/>
</dbReference>
<dbReference type="GO" id="GO:0008270">
    <property type="term" value="F:zinc ion binding"/>
    <property type="evidence" value="ECO:0007669"/>
    <property type="project" value="UniProtKB-KW"/>
</dbReference>
<dbReference type="GO" id="GO:0010571">
    <property type="term" value="P:positive regulation of nuclear cell cycle DNA replication"/>
    <property type="evidence" value="ECO:0000315"/>
    <property type="project" value="UniProtKB"/>
</dbReference>
<dbReference type="GO" id="GO:0050821">
    <property type="term" value="P:protein stabilization"/>
    <property type="evidence" value="ECO:0000315"/>
    <property type="project" value="UniProtKB"/>
</dbReference>
<dbReference type="GO" id="GO:0006357">
    <property type="term" value="P:regulation of transcription by RNA polymerase II"/>
    <property type="evidence" value="ECO:0000318"/>
    <property type="project" value="GO_Central"/>
</dbReference>
<dbReference type="FunFam" id="3.30.160.60:FF:001682">
    <property type="entry name" value="protein Wiz isoform X1"/>
    <property type="match status" value="1"/>
</dbReference>
<dbReference type="Gene3D" id="3.30.160.60">
    <property type="entry name" value="Classic Zinc Finger"/>
    <property type="match status" value="2"/>
</dbReference>
<dbReference type="InterPro" id="IPR051643">
    <property type="entry name" value="Transcr_Reg_ZincFinger"/>
</dbReference>
<dbReference type="InterPro" id="IPR055125">
    <property type="entry name" value="Wiz_C_Znf"/>
</dbReference>
<dbReference type="InterPro" id="IPR036236">
    <property type="entry name" value="Znf_C2H2_sf"/>
</dbReference>
<dbReference type="InterPro" id="IPR013087">
    <property type="entry name" value="Znf_C2H2_type"/>
</dbReference>
<dbReference type="PANTHER" id="PTHR24396:SF22">
    <property type="entry name" value="PROTEIN WIZ"/>
    <property type="match status" value="1"/>
</dbReference>
<dbReference type="PANTHER" id="PTHR24396">
    <property type="entry name" value="ZINC FINGER PROTEIN"/>
    <property type="match status" value="1"/>
</dbReference>
<dbReference type="Pfam" id="PF23015">
    <property type="entry name" value="zf-WIZ"/>
    <property type="match status" value="1"/>
</dbReference>
<dbReference type="SMART" id="SM00355">
    <property type="entry name" value="ZnF_C2H2"/>
    <property type="match status" value="11"/>
</dbReference>
<dbReference type="SUPFAM" id="SSF57667">
    <property type="entry name" value="beta-beta-alpha zinc fingers"/>
    <property type="match status" value="3"/>
</dbReference>
<dbReference type="PROSITE" id="PS00028">
    <property type="entry name" value="ZINC_FINGER_C2H2_1"/>
    <property type="match status" value="8"/>
</dbReference>
<dbReference type="PROSITE" id="PS50157">
    <property type="entry name" value="ZINC_FINGER_C2H2_2"/>
    <property type="match status" value="7"/>
</dbReference>
<organism>
    <name type="scientific">Homo sapiens</name>
    <name type="common">Human</name>
    <dbReference type="NCBI Taxonomy" id="9606"/>
    <lineage>
        <taxon>Eukaryota</taxon>
        <taxon>Metazoa</taxon>
        <taxon>Chordata</taxon>
        <taxon>Craniata</taxon>
        <taxon>Vertebrata</taxon>
        <taxon>Euteleostomi</taxon>
        <taxon>Mammalia</taxon>
        <taxon>Eutheria</taxon>
        <taxon>Euarchontoglires</taxon>
        <taxon>Primates</taxon>
        <taxon>Haplorrhini</taxon>
        <taxon>Catarrhini</taxon>
        <taxon>Hominidae</taxon>
        <taxon>Homo</taxon>
    </lineage>
</organism>
<sequence length="1651" mass="178674">MEGSLAGSLAAPDRPQGPERLPGPAPRENIEGGAEAAEGEGGIFRSTRYLPVTKEGPRDILDGRGGISGTPDGRGPWEHPLVQEAGEGILSERRFEDSVIVRTMKPHAELEGSRRFLHHRGEPRLLEKHAQGRPRFDWLQDEDEQGSPQDAGLHLDLPAQPPPLAPFRRVFVPVEDTPKTLDMAVVGGREDLEDLEGLAQPSEWGLPTSASEVATQTWTVNSEASVERLQPLLPPIRTGPYLCELLEEVAEGVASPDEDEDEEPAVFPCIECSIYFKQKEHLLEHMSQHRRAPGQEPPADLAPLACGECGWAFADPTALEQHRQLHQASREKIIEEIQKLKQVPGDEGREARLQCPKCVFGTNSSRAYVQHAKLHMREPPGQTTKEPFGGSSGAGSPSPEASALLYQPYGAAVGLSACVFCGFPAPSESLLREHVRLVHAHPHWEEDGEAYEEDPASQPGTSQDAHACFPDTAVDYFGKAEPSLAPMWRENPAGYDPSLAFGPGCQQLSIRDFPLSKPLLHGTGQRPLGRLAFPSTLASTPYSLQLGRNKSTVHPQGLGERRRPWSEEEEEEEEEEDVVLTSEMDFSPENGVFSPLATPSLIPQAALELKQAFREALQAVEATQGQQQQLRGMVPIVLVAKLGPQVMAAARVPPRLQPEELGLAGAHPLDFLLLDAPLGGPLGLDTLLDGDPAMALKHEERKCPYCPDRFHNGIGLANHVRGHLNRVGVSYNVRHFISAEEVKAIERRFSFQKKKKKVANFDPGTFSLMRCDFCGAGFDTRAGLSSHARAHLRDFGITNWELTVSPINILQELLATSAAEQPPSPLGREPGGPPGSFLTSRRPRLPLTVPFPPTWAEDPGPAYGDAQSLTTCEVCGACFETRKGLSSHARSHLRQLGVAESESSGAPIDLLYELVKQKGLPDAHLGLPPGLAKKSSSLKEVVAGAPRPGLLSLAKPLDAPAVNKAIKSPPGFSAKGLGHPPSSPLLKKTPLALAGSPTPKNPEDKSPQLSLSPRPASPKAQWPQSEDEGPLNLTSGPEPARDIRCEFCGEFFENRKGLSSHARSHLRQMGVTEWYVNGSPIDTLREILKRRTQSRPGGPPNPPGPSPKALAKMMGGAGPGSSLEARSPSDLHISPLAKKLPPPPGSPLGHSPTASPPPTARKMFPGLAAPSLPKKLKPEQIRVEIKREMLPGALHGELHPSEGPWGAPREDMTPLNLSSRAEPVRDIRCEFCGEFFENRKGLSSHARSHLRQMGVTEWSVNGSPIDTLREILKKKSKPCLIKKEPPAGDLAPALAEDGPPTVAPGPVQSPLPLSPLAGRPGKPGAGPAQVPRELSLTPITGAKPSATGYLGSVAAKRPLQEDRLLPAEVKAKTYIQTELPFKAKTLHEKTSHSSTEACCELCGLYFENRKALASHARAHLRQFGVTEWCVNGSPIETLSEWIKHRPQKVGAYRSYIQGGRPFTKKFRSAGHGRDSDKRPSLGLAPGGLAVVGRSAGGEPGPEAGRAADGGERPLAASPPGTVKAEEHQRQNINKFERRQARPPDASAARGGEDTNDLQQKLEEVRQPPPRVRPVPSLVPRPPQTSLVKFVGNIYTLKCRFCEVEFQGPLSIQEEWVRHLQRHILEMNFSKADPPPEESQAPQAQTAAAEAP</sequence>
<accession>O95785</accession>
<accession>B3KVH1</accession>
<accession>B7ZM82</accession>
<accession>M0QY21</accession>
<accession>Q4G0E0</accession>
<accession>Q6P6B0</accession>
<accession>Q6ZN24</accession>
<accession>Q7LDY6</accession>
<accession>Q7LDZ1</accession>
<accession>Q96IG5</accession>
<accession>Q96SQ6</accession>
<accession>Q9BUR8</accession>
<accession>Q9NPT1</accession>
<feature type="chain" id="PRO_0000286054" description="Protein Wiz">
    <location>
        <begin position="1"/>
        <end position="1651"/>
    </location>
</feature>
<feature type="zinc finger region" description="C2H2-type 1" evidence="2">
    <location>
        <begin position="267"/>
        <end position="289"/>
    </location>
</feature>
<feature type="zinc finger region" description="C2H2-type 2" evidence="2">
    <location>
        <begin position="304"/>
        <end position="326"/>
    </location>
</feature>
<feature type="zinc finger region" description="C2H2-type 3" evidence="2">
    <location>
        <begin position="353"/>
        <end position="375"/>
    </location>
</feature>
<feature type="zinc finger region" description="C2H2-type 4" evidence="2">
    <location>
        <begin position="416"/>
        <end position="439"/>
    </location>
</feature>
<feature type="zinc finger region" description="C2H2-type 5" evidence="2">
    <location>
        <begin position="701"/>
        <end position="723"/>
    </location>
</feature>
<feature type="zinc finger region" description="C2H2-type 6" evidence="2">
    <location>
        <begin position="769"/>
        <end position="791"/>
    </location>
</feature>
<feature type="zinc finger region" description="C2H2-type 7" evidence="2">
    <location>
        <begin position="870"/>
        <end position="892"/>
    </location>
</feature>
<feature type="zinc finger region" description="C2H2-type 8" evidence="2">
    <location>
        <begin position="1043"/>
        <end position="1065"/>
    </location>
</feature>
<feature type="zinc finger region" description="C2H2-type 9" evidence="2">
    <location>
        <begin position="1227"/>
        <end position="1249"/>
    </location>
</feature>
<feature type="zinc finger region" description="C2H2-type 10" evidence="2">
    <location>
        <begin position="1397"/>
        <end position="1419"/>
    </location>
</feature>
<feature type="zinc finger region" description="C2H2-type 11" evidence="2">
    <location>
        <begin position="1596"/>
        <end position="1622"/>
    </location>
</feature>
<feature type="region of interest" description="Disordered" evidence="3">
    <location>
        <begin position="1"/>
        <end position="79"/>
    </location>
</feature>
<feature type="region of interest" description="Disordered" evidence="3">
    <location>
        <begin position="376"/>
        <end position="399"/>
    </location>
</feature>
<feature type="region of interest" description="Disordered" evidence="3">
    <location>
        <begin position="546"/>
        <end position="578"/>
    </location>
</feature>
<feature type="region of interest" description="Disordered" evidence="3">
    <location>
        <begin position="819"/>
        <end position="843"/>
    </location>
</feature>
<feature type="region of interest" description="Disordered" evidence="3">
    <location>
        <begin position="972"/>
        <end position="1038"/>
    </location>
</feature>
<feature type="region of interest" description="Interaction with CTBP1 and CTBP2 1" evidence="1">
    <location>
        <begin position="1030"/>
        <end position="1034"/>
    </location>
</feature>
<feature type="region of interest" description="Disordered" evidence="3">
    <location>
        <begin position="1091"/>
        <end position="1174"/>
    </location>
</feature>
<feature type="region of interest" description="Interaction with CTBP1 and CTBP2 2" evidence="1">
    <location>
        <begin position="1214"/>
        <end position="1218"/>
    </location>
</feature>
<feature type="region of interest" description="Disordered" evidence="3">
    <location>
        <begin position="1283"/>
        <end position="1331"/>
    </location>
</feature>
<feature type="region of interest" description="Disordered" evidence="3">
    <location>
        <begin position="1463"/>
        <end position="1554"/>
    </location>
</feature>
<feature type="region of interest" description="Disordered" evidence="3">
    <location>
        <begin position="1629"/>
        <end position="1651"/>
    </location>
</feature>
<feature type="compositionally biased region" description="Low complexity" evidence="3">
    <location>
        <begin position="386"/>
        <end position="399"/>
    </location>
</feature>
<feature type="compositionally biased region" description="Acidic residues" evidence="3">
    <location>
        <begin position="567"/>
        <end position="578"/>
    </location>
</feature>
<feature type="compositionally biased region" description="Low complexity" evidence="3">
    <location>
        <begin position="984"/>
        <end position="994"/>
    </location>
</feature>
<feature type="compositionally biased region" description="Pro residues" evidence="3">
    <location>
        <begin position="1097"/>
        <end position="1106"/>
    </location>
</feature>
<feature type="compositionally biased region" description="Pro residues" evidence="3">
    <location>
        <begin position="1301"/>
        <end position="1313"/>
    </location>
</feature>
<feature type="compositionally biased region" description="Low complexity" evidence="3">
    <location>
        <begin position="1315"/>
        <end position="1328"/>
    </location>
</feature>
<feature type="compositionally biased region" description="Low complexity" evidence="3">
    <location>
        <begin position="1481"/>
        <end position="1493"/>
    </location>
</feature>
<feature type="compositionally biased region" description="Basic and acidic residues" evidence="3">
    <location>
        <begin position="1523"/>
        <end position="1541"/>
    </location>
</feature>
<feature type="compositionally biased region" description="Low complexity" evidence="3">
    <location>
        <begin position="1637"/>
        <end position="1651"/>
    </location>
</feature>
<feature type="modified residue" description="Phosphoserine" evidence="11 12 13 14">
    <location>
        <position position="996"/>
    </location>
</feature>
<feature type="modified residue" description="Phosphothreonine" evidence="12 13 14">
    <location>
        <position position="998"/>
    </location>
</feature>
<feature type="modified residue" description="Phosphoserine" evidence="9 11 12 13 14">
    <location>
        <position position="1006"/>
    </location>
</feature>
<feature type="modified residue" description="Phosphoserine" evidence="9 11 12 13 14">
    <location>
        <position position="1012"/>
    </location>
</feature>
<feature type="modified residue" description="Phosphoserine" evidence="9 11 12 13 14">
    <location>
        <position position="1017"/>
    </location>
</feature>
<feature type="modified residue" description="Phosphoserine" evidence="14">
    <location>
        <position position="1025"/>
    </location>
</feature>
<feature type="modified residue" description="Phosphoserine" evidence="12">
    <location>
        <position position="1079"/>
    </location>
</feature>
<feature type="modified residue" description="Phosphoserine" evidence="14">
    <location>
        <position position="1106"/>
    </location>
</feature>
<feature type="modified residue" description="Phosphoserine" evidence="14">
    <location>
        <position position="1122"/>
    </location>
</feature>
<feature type="modified residue" description="Phosphoserine" evidence="9 14">
    <location>
        <position position="1127"/>
    </location>
</feature>
<feature type="modified residue" description="Phosphoserine" evidence="9 10 12 14">
    <location>
        <position position="1134"/>
    </location>
</feature>
<feature type="modified residue" description="Phosphoserine" evidence="9 14">
    <location>
        <position position="1146"/>
    </location>
</feature>
<feature type="modified residue" description="Phosphoserine" evidence="9">
    <location>
        <position position="1151"/>
    </location>
</feature>
<feature type="modified residue" description="N6,N6,N6-trimethyllysine; by EHMT2; alternate" evidence="4">
    <location>
        <position position="1162"/>
    </location>
</feature>
<feature type="modified residue" description="N6,N6-dimethyllysine; by EHMT2; alternate" evidence="4">
    <location>
        <position position="1162"/>
    </location>
</feature>
<feature type="modified residue" description="Phosphoserine" evidence="12">
    <location>
        <position position="1263"/>
    </location>
</feature>
<feature type="modified residue" description="Phosphoserine" evidence="12">
    <location>
        <position position="1309"/>
    </location>
</feature>
<feature type="modified residue" description="Phosphoserine" evidence="12">
    <location>
        <position position="1314"/>
    </location>
</feature>
<feature type="modified residue" description="Phosphoserine" evidence="14">
    <location>
        <position position="1480"/>
    </location>
</feature>
<feature type="modified residue" description="Phosphoserine" evidence="12 14">
    <location>
        <position position="1517"/>
    </location>
</feature>
<feature type="cross-link" description="Glycyl lysine isopeptide (Lys-Gly) (interchain with G-Cter in SUMO2)" evidence="19">
    <location>
        <position position="883"/>
    </location>
</feature>
<feature type="cross-link" description="Glycyl lysine isopeptide (Lys-Gly) (interchain with G-Cter in SUMO2)" evidence="18 19">
    <location>
        <position position="939"/>
    </location>
</feature>
<feature type="cross-link" description="Glycyl lysine isopeptide (Lys-Gly) (interchain with G-Cter in SUMO2)" evidence="19">
    <location>
        <position position="955"/>
    </location>
</feature>
<feature type="cross-link" description="Glycyl lysine isopeptide (Lys-Gly) (interchain with G-Cter in SUMO2)" evidence="19">
    <location>
        <position position="967"/>
    </location>
</feature>
<feature type="cross-link" description="Glycyl lysine isopeptide (Lys-Gly) (interchain with G-Cter in SUMO2)" evidence="16 18 19">
    <location>
        <position position="988"/>
    </location>
</feature>
<feature type="cross-link" description="Glycyl lysine isopeptide (Lys-Gly) (interchain with G-Cter in SUMO2)" evidence="19">
    <location>
        <position position="1000"/>
    </location>
</feature>
<feature type="cross-link" description="Glycyl lysine isopeptide (Lys-Gly) (interchain with G-Cter in SUMO2)" evidence="19">
    <location>
        <position position="1005"/>
    </location>
</feature>
<feature type="cross-link" description="Glycyl lysine isopeptide (Lys-Gly) (interchain with G-Cter in SUMO2)" evidence="19">
    <location>
        <position position="1056"/>
    </location>
</feature>
<feature type="cross-link" description="Glycyl lysine isopeptide (Lys-Gly) (interchain with G-Cter in SUMO2)" evidence="16 19">
    <location>
        <position position="1108"/>
    </location>
</feature>
<feature type="cross-link" description="Glycyl lysine isopeptide (Lys-Gly) (interchain with G-Cter in SUMO2)" evidence="16 18 19">
    <location>
        <position position="1112"/>
    </location>
</feature>
<feature type="cross-link" description="Glycyl lysine isopeptide (Lys-Gly) (interchain with G-Cter in SUMO2)" evidence="19">
    <location>
        <position position="1138"/>
    </location>
</feature>
<feature type="cross-link" description="Glycyl lysine isopeptide (Lys-Gly) (interchain with G-Cter in SUMO2)" evidence="19">
    <location>
        <position position="1139"/>
    </location>
</feature>
<feature type="cross-link" description="Glycyl lysine isopeptide (Lys-Gly) (interchain with G-Cter in SUMO2)" evidence="16 19">
    <location>
        <position position="1177"/>
    </location>
</feature>
<feature type="cross-link" description="Glycyl lysine isopeptide (Lys-Gly) (interchain with G-Cter in SUMO2)" evidence="19">
    <location>
        <position position="1240"/>
    </location>
</feature>
<feature type="cross-link" description="Glycyl lysine isopeptide (Lys-Gly) (interchain with G-Cter in SUMO2)" evidence="17 18">
    <location>
        <position position="1282"/>
    </location>
</feature>
<feature type="cross-link" description="Glycyl lysine isopeptide (Lys-Gly) (interchain with G-Cter in SUMO2)" evidence="18 19">
    <location>
        <position position="1343"/>
    </location>
</feature>
<feature type="cross-link" description="Glycyl lysine isopeptide (Lys-Gly) (interchain with G-Cter in SUMO2)" evidence="16 18 19">
    <location>
        <position position="1356"/>
    </location>
</feature>
<feature type="cross-link" description="Glycyl lysine isopeptide (Lys-Gly) (interchain with G-Cter in SUMO2)" evidence="16 17 19">
    <location>
        <position position="1370"/>
    </location>
</feature>
<feature type="cross-link" description="Glycyl lysine isopeptide (Lys-Gly) (interchain with G-Cter in SUMO2)" evidence="16 17 18 19">
    <location>
        <position position="1372"/>
    </location>
</feature>
<feature type="cross-link" description="Glycyl lysine isopeptide (Lys-Gly) (interchain with G-Cter in SUMO2)" evidence="16 17 19">
    <location>
        <position position="1382"/>
    </location>
</feature>
<feature type="cross-link" description="Glycyl lysine isopeptide (Lys-Gly) (interchain with G-Cter in SUMO2)" evidence="17 19">
    <location>
        <position position="1448"/>
    </location>
</feature>
<feature type="cross-link" description="Glycyl lysine isopeptide (Lys-Gly) (interchain with G-Cter in SUMO2)" evidence="19">
    <location>
        <position position="1464"/>
    </location>
</feature>
<feature type="cross-link" description="Glycyl lysine isopeptide (Lys-Gly) (interchain with G-Cter in SUMO2)" evidence="18 19">
    <location>
        <position position="1477"/>
    </location>
</feature>
<feature type="cross-link" description="Glycyl lysine isopeptide (Lys-Gly) (interchain with G-Cter in SUMO1); alternate" evidence="15">
    <location>
        <position position="1523"/>
    </location>
</feature>
<feature type="cross-link" description="Glycyl lysine isopeptide (Lys-Gly) (interchain with G-Cter in SUMO2); alternate" evidence="15 16 17 18 19">
    <location>
        <position position="1523"/>
    </location>
</feature>
<feature type="cross-link" description="Glycyl lysine isopeptide (Lys-Gly) (interchain with G-Cter in SUMO2)" evidence="19">
    <location>
        <position position="1534"/>
    </location>
</feature>
<feature type="cross-link" description="Glycyl lysine isopeptide (Lys-Gly) (interchain with G-Cter in SUMO2)" evidence="19">
    <location>
        <position position="1560"/>
    </location>
</feature>
<feature type="cross-link" description="Glycyl lysine isopeptide (Lys-Gly) (interchain with G-Cter in SUMO2)" evidence="19">
    <location>
        <position position="1630"/>
    </location>
</feature>
<feature type="splice variant" id="VSP_057207" description="In isoform 4." evidence="6">
    <original>MEGSLAGSLAAPDRPQGPERLPGPAPRENIEGGAEAAEGEGGIFRSTRY</original>
    <variation>MVAMDLGSPSLPKKSLPVPGALEQVASRLSSKVAAEVPHGSKQELQDLK</variation>
    <location>
        <begin position="1"/>
        <end position="49"/>
    </location>
</feature>
<feature type="splice variant" id="VSP_054509" description="In isoform 3." evidence="7">
    <original>MEGSLAGSLAAPDRPQGPERLPGPAPRENIEGGAEAAEGEGGIFRS</original>
    <variation>MDLGSPSLPKKSLPVPGALEQVASRLSSKVAAEVPHGSKQELQDLK</variation>
    <location>
        <begin position="1"/>
        <end position="46"/>
    </location>
</feature>
<feature type="splice variant" id="VSP_054510" description="In isoform 3." evidence="7">
    <location>
        <begin position="47"/>
        <end position="865"/>
    </location>
</feature>
<feature type="splice variant" id="VSP_057208" description="In isoform 4." evidence="6">
    <location>
        <begin position="50"/>
        <end position="865"/>
    </location>
</feature>
<feature type="splice variant" id="VSP_024951" description="In isoform 2." evidence="6">
    <location>
        <begin position="69"/>
        <end position="757"/>
    </location>
</feature>
<feature type="splice variant" id="VSP_024952" description="In isoform 2." evidence="6">
    <location>
        <begin position="867"/>
        <end position="1034"/>
    </location>
</feature>
<feature type="splice variant" id="VSP_054511" description="In isoform 3." evidence="7">
    <original>T</original>
    <variation>TLDSDGGRELDCQLCGAWFETRKGLSSHARAHLRHLGVSDPDAKGSPIDVLHGLIRRDGVQIRLPPRRGALAHPGRPPPTSAALSLLPPPPPAKKAKLKAAGMASPWGKQDLSAAAAAGIFWASDVEPSPLNLS</variation>
    <location>
        <position position="1034"/>
    </location>
</feature>
<feature type="sequence conflict" description="In Ref. 2; BAD18551." evidence="8" ref="2">
    <original>T</original>
    <variation>A</variation>
    <location>
        <position position="1373"/>
    </location>
</feature>
<feature type="turn" evidence="20">
    <location>
        <begin position="873"/>
        <end position="875"/>
    </location>
</feature>
<feature type="helix" evidence="20">
    <location>
        <begin position="882"/>
        <end position="890"/>
    </location>
</feature>
<feature type="cross-link" description="Glycyl lysine isopeptide (Lys-Gly) (interchain with G-Cter in SUMO2)" evidence="18 19">
    <location sequence="O95785-3">
        <position position="11"/>
    </location>
</feature>
<feature type="cross-link" description="Glycyl lysine isopeptide (Lys-Gly) (interchain with G-Cter in SUMO2)" evidence="19">
    <location sequence="O95785-3">
        <position position="29"/>
    </location>
</feature>
<feature type="cross-link" description="Glycyl lysine isopeptide (Lys-Gly) (interchain with G-Cter in SUMO2)" evidence="16 19">
    <location sequence="O95785-3">
        <position position="39"/>
    </location>
</feature>
<feature type="cross-link" description="Glycyl lysine isopeptide (Lys-Gly) (interchain with G-Cter in SUMO2)" evidence="18 19">
    <location sequence="O95785-3">
        <position position="258"/>
    </location>
</feature>
<feature type="cross-link" description="Glycyl lysine isopeptide (Lys-Gly) (interchain with G-Cter in SUMO2)" evidence="19">
    <location sequence="O95785-3">
        <position position="313"/>
    </location>
</feature>
<feature type="cross-link" description="Glycyl lysine isopeptide (Lys-Gly) (interchain with G-Cter in SUMO2)" evidence="18 19">
    <location sequence="O95785-4">
        <position position="14"/>
    </location>
</feature>
<feature type="cross-link" description="Glycyl lysine isopeptide (Lys-Gly) (interchain with G-Cter in SUMO2)" evidence="19">
    <location sequence="O95785-4">
        <position position="32"/>
    </location>
</feature>
<feature type="cross-link" description="Glycyl lysine isopeptide (Lys-Gly) (interchain with G-Cter in SUMO2)" evidence="16 19">
    <location sequence="O95785-4">
        <position position="42"/>
    </location>
</feature>
<protein>
    <recommendedName>
        <fullName>Protein Wiz</fullName>
    </recommendedName>
    <alternativeName>
        <fullName>Widely-interspaced zinc finger-containing protein</fullName>
    </alternativeName>
    <alternativeName>
        <fullName>Zinc finger protein 803</fullName>
    </alternativeName>
</protein>
<keyword id="KW-0002">3D-structure</keyword>
<keyword id="KW-0025">Alternative splicing</keyword>
<keyword id="KW-1017">Isopeptide bond</keyword>
<keyword id="KW-0479">Metal-binding</keyword>
<keyword id="KW-0488">Methylation</keyword>
<keyword id="KW-0539">Nucleus</keyword>
<keyword id="KW-0597">Phosphoprotein</keyword>
<keyword id="KW-1267">Proteomics identification</keyword>
<keyword id="KW-1185">Reference proteome</keyword>
<keyword id="KW-0677">Repeat</keyword>
<keyword id="KW-0832">Ubl conjugation</keyword>
<keyword id="KW-0862">Zinc</keyword>
<keyword id="KW-0863">Zinc-finger</keyword>
<evidence type="ECO:0000250" key="1"/>
<evidence type="ECO:0000255" key="2">
    <source>
        <dbReference type="PROSITE-ProRule" id="PRU00042"/>
    </source>
</evidence>
<evidence type="ECO:0000256" key="3">
    <source>
        <dbReference type="SAM" id="MobiDB-lite"/>
    </source>
</evidence>
<evidence type="ECO:0000269" key="4">
    <source>
    </source>
</evidence>
<evidence type="ECO:0000269" key="5">
    <source>
    </source>
</evidence>
<evidence type="ECO:0000303" key="6">
    <source>
    </source>
</evidence>
<evidence type="ECO:0000303" key="7">
    <source>
    </source>
</evidence>
<evidence type="ECO:0000305" key="8"/>
<evidence type="ECO:0007744" key="9">
    <source>
    </source>
</evidence>
<evidence type="ECO:0007744" key="10">
    <source>
    </source>
</evidence>
<evidence type="ECO:0007744" key="11">
    <source>
    </source>
</evidence>
<evidence type="ECO:0007744" key="12">
    <source>
    </source>
</evidence>
<evidence type="ECO:0007744" key="13">
    <source>
    </source>
</evidence>
<evidence type="ECO:0007744" key="14">
    <source>
    </source>
</evidence>
<evidence type="ECO:0007744" key="15">
    <source>
    </source>
</evidence>
<evidence type="ECO:0007744" key="16">
    <source>
    </source>
</evidence>
<evidence type="ECO:0007744" key="17">
    <source>
    </source>
</evidence>
<evidence type="ECO:0007744" key="18">
    <source>
    </source>
</evidence>
<evidence type="ECO:0007744" key="19">
    <source>
    </source>
</evidence>
<evidence type="ECO:0007829" key="20">
    <source>
        <dbReference type="PDB" id="8TZX"/>
    </source>
</evidence>
<comment type="function">
    <text evidence="1">May link EHMT1 and EHMT2 histone methyltransferases to the CTBP corepressor machinery. May be involved in EHMT1-EHMT2 heterodimer formation and stabilization (By similarity).</text>
</comment>
<comment type="subunit">
    <text evidence="1 5">Interacts with EHMT1, EHMT2, CTBP1 and CTBP2 (By similarity). Part of a complex containing at least CDYL, REST, WIZ, SETB1, EHMT1 and EHMT2.</text>
</comment>
<comment type="subcellular location">
    <subcellularLocation>
        <location evidence="1">Nucleus</location>
    </subcellularLocation>
</comment>
<comment type="alternative products">
    <event type="alternative splicing"/>
    <isoform>
        <id>O95785-1</id>
        <name>1</name>
        <sequence type="displayed"/>
    </isoform>
    <isoform>
        <id>O95785-2</id>
        <name>2</name>
        <sequence type="described" ref="VSP_024951 VSP_024952"/>
    </isoform>
    <isoform>
        <id>O95785-3</id>
        <name>3</name>
        <sequence type="described" ref="VSP_054509 VSP_054510 VSP_054511"/>
    </isoform>
    <isoform>
        <id>O95785-4</id>
        <name>4</name>
        <sequence type="described" ref="VSP_057207 VSP_057208"/>
    </isoform>
</comment>
<comment type="domain">
    <text evidence="1">The C2H2-type zinc finger 11 mediates interaction with EHMT1 and EHMT2.</text>
</comment>
<comment type="similarity">
    <text evidence="8">Belongs to the krueppel C2H2-type zinc-finger protein family.</text>
</comment>
<comment type="sequence caution" evidence="8">
    <conflict type="erroneous initiation">
        <sequence resource="EMBL-CDS" id="BAB55234"/>
    </conflict>
    <text>Truncated N-terminus.</text>
</comment>